<organism>
    <name type="scientific">Streptococcus pneumoniae (strain Taiwan19F-14)</name>
    <dbReference type="NCBI Taxonomy" id="487213"/>
    <lineage>
        <taxon>Bacteria</taxon>
        <taxon>Bacillati</taxon>
        <taxon>Bacillota</taxon>
        <taxon>Bacilli</taxon>
        <taxon>Lactobacillales</taxon>
        <taxon>Streptococcaceae</taxon>
        <taxon>Streptococcus</taxon>
    </lineage>
</organism>
<reference key="1">
    <citation type="journal article" date="2010" name="Genome Biol.">
        <title>Structure and dynamics of the pan-genome of Streptococcus pneumoniae and closely related species.</title>
        <authorList>
            <person name="Donati C."/>
            <person name="Hiller N.L."/>
            <person name="Tettelin H."/>
            <person name="Muzzi A."/>
            <person name="Croucher N.J."/>
            <person name="Angiuoli S.V."/>
            <person name="Oggioni M."/>
            <person name="Dunning Hotopp J.C."/>
            <person name="Hu F.Z."/>
            <person name="Riley D.R."/>
            <person name="Covacci A."/>
            <person name="Mitchell T.J."/>
            <person name="Bentley S.D."/>
            <person name="Kilian M."/>
            <person name="Ehrlich G.D."/>
            <person name="Rappuoli R."/>
            <person name="Moxon E.R."/>
            <person name="Masignani V."/>
        </authorList>
    </citation>
    <scope>NUCLEOTIDE SEQUENCE [LARGE SCALE GENOMIC DNA]</scope>
    <source>
        <strain>Taiwan19F-14</strain>
    </source>
</reference>
<feature type="chain" id="PRO_1000191820" description="Transcriptional repressor NrdR">
    <location>
        <begin position="1"/>
        <end position="157"/>
    </location>
</feature>
<feature type="domain" description="ATP-cone" evidence="1">
    <location>
        <begin position="49"/>
        <end position="139"/>
    </location>
</feature>
<feature type="zinc finger region" evidence="1">
    <location>
        <begin position="3"/>
        <end position="34"/>
    </location>
</feature>
<feature type="region of interest" description="Disordered" evidence="2">
    <location>
        <begin position="1"/>
        <end position="22"/>
    </location>
</feature>
<name>NRDR_STRZT</name>
<comment type="function">
    <text evidence="1">Negatively regulates transcription of bacterial ribonucleotide reductase nrd genes and operons by binding to NrdR-boxes.</text>
</comment>
<comment type="cofactor">
    <cofactor evidence="1">
        <name>Zn(2+)</name>
        <dbReference type="ChEBI" id="CHEBI:29105"/>
    </cofactor>
    <text evidence="1">Binds 1 zinc ion.</text>
</comment>
<comment type="similarity">
    <text evidence="1">Belongs to the NrdR family.</text>
</comment>
<protein>
    <recommendedName>
        <fullName evidence="1">Transcriptional repressor NrdR</fullName>
    </recommendedName>
</protein>
<evidence type="ECO:0000255" key="1">
    <source>
        <dbReference type="HAMAP-Rule" id="MF_00440"/>
    </source>
</evidence>
<evidence type="ECO:0000256" key="2">
    <source>
        <dbReference type="SAM" id="MobiDB-lite"/>
    </source>
</evidence>
<dbReference type="EMBL" id="CP000921">
    <property type="protein sequence ID" value="ACO22231.1"/>
    <property type="molecule type" value="Genomic_DNA"/>
</dbReference>
<dbReference type="RefSeq" id="WP_001203672.1">
    <property type="nucleotide sequence ID" value="NC_012469.1"/>
</dbReference>
<dbReference type="SMR" id="C1CSX4"/>
<dbReference type="GeneID" id="93740109"/>
<dbReference type="KEGG" id="snt:SPT_1651"/>
<dbReference type="HOGENOM" id="CLU_108412_0_0_9"/>
<dbReference type="GO" id="GO:0005524">
    <property type="term" value="F:ATP binding"/>
    <property type="evidence" value="ECO:0007669"/>
    <property type="project" value="UniProtKB-KW"/>
</dbReference>
<dbReference type="GO" id="GO:0003677">
    <property type="term" value="F:DNA binding"/>
    <property type="evidence" value="ECO:0007669"/>
    <property type="project" value="UniProtKB-KW"/>
</dbReference>
<dbReference type="GO" id="GO:0008270">
    <property type="term" value="F:zinc ion binding"/>
    <property type="evidence" value="ECO:0007669"/>
    <property type="project" value="UniProtKB-UniRule"/>
</dbReference>
<dbReference type="GO" id="GO:0045892">
    <property type="term" value="P:negative regulation of DNA-templated transcription"/>
    <property type="evidence" value="ECO:0007669"/>
    <property type="project" value="UniProtKB-UniRule"/>
</dbReference>
<dbReference type="HAMAP" id="MF_00440">
    <property type="entry name" value="NrdR"/>
    <property type="match status" value="1"/>
</dbReference>
<dbReference type="InterPro" id="IPR005144">
    <property type="entry name" value="ATP-cone_dom"/>
</dbReference>
<dbReference type="InterPro" id="IPR055173">
    <property type="entry name" value="NrdR-like_N"/>
</dbReference>
<dbReference type="InterPro" id="IPR003796">
    <property type="entry name" value="RNR_NrdR-like"/>
</dbReference>
<dbReference type="NCBIfam" id="TIGR00244">
    <property type="entry name" value="transcriptional regulator NrdR"/>
    <property type="match status" value="1"/>
</dbReference>
<dbReference type="PANTHER" id="PTHR30455">
    <property type="entry name" value="TRANSCRIPTIONAL REPRESSOR NRDR"/>
    <property type="match status" value="1"/>
</dbReference>
<dbReference type="PANTHER" id="PTHR30455:SF2">
    <property type="entry name" value="TRANSCRIPTIONAL REPRESSOR NRDR"/>
    <property type="match status" value="1"/>
</dbReference>
<dbReference type="Pfam" id="PF03477">
    <property type="entry name" value="ATP-cone"/>
    <property type="match status" value="1"/>
</dbReference>
<dbReference type="Pfam" id="PF22811">
    <property type="entry name" value="Zn_ribbon_NrdR"/>
    <property type="match status" value="1"/>
</dbReference>
<dbReference type="PROSITE" id="PS51161">
    <property type="entry name" value="ATP_CONE"/>
    <property type="match status" value="1"/>
</dbReference>
<keyword id="KW-0067">ATP-binding</keyword>
<keyword id="KW-0238">DNA-binding</keyword>
<keyword id="KW-0479">Metal-binding</keyword>
<keyword id="KW-0547">Nucleotide-binding</keyword>
<keyword id="KW-0678">Repressor</keyword>
<keyword id="KW-0804">Transcription</keyword>
<keyword id="KW-0805">Transcription regulation</keyword>
<keyword id="KW-0862">Zinc</keyword>
<keyword id="KW-0863">Zinc-finger</keyword>
<sequence length="157" mass="18380">MRCPKCGATKSSVIDSRQAEEGNTIRRRRECDECQHRFTTYERVEERTLVVVKKDGTREQFSRDKIFNGIIRSAQKRPVSSDEINMVVNRIEQKLRGRNENEIQSEDIGSLVMEELAELDEITYVRFASVYRSFKDVSELESLLQQITQSSKKKKER</sequence>
<gene>
    <name evidence="1" type="primary">nrdR</name>
    <name type="ordered locus">SPT_1651</name>
</gene>
<accession>C1CSX4</accession>
<proteinExistence type="inferred from homology"/>